<accession>P0CB94</accession>
<accession>Q0MQD9</accession>
<accession>Q5RBV5</accession>
<organism>
    <name type="scientific">Pongo pygmaeus</name>
    <name type="common">Bornean orangutan</name>
    <dbReference type="NCBI Taxonomy" id="9600"/>
    <lineage>
        <taxon>Eukaryota</taxon>
        <taxon>Metazoa</taxon>
        <taxon>Chordata</taxon>
        <taxon>Craniata</taxon>
        <taxon>Vertebrata</taxon>
        <taxon>Euteleostomi</taxon>
        <taxon>Mammalia</taxon>
        <taxon>Eutheria</taxon>
        <taxon>Euarchontoglires</taxon>
        <taxon>Primates</taxon>
        <taxon>Haplorrhini</taxon>
        <taxon>Catarrhini</taxon>
        <taxon>Hominidae</taxon>
        <taxon>Pongo</taxon>
    </lineage>
</organism>
<evidence type="ECO:0000250" key="1">
    <source>
        <dbReference type="UniProtKB" id="O95139"/>
    </source>
</evidence>
<evidence type="ECO:0000250" key="2">
    <source>
        <dbReference type="UniProtKB" id="Q3UIU2"/>
    </source>
</evidence>
<evidence type="ECO:0000255" key="3"/>
<evidence type="ECO:0000305" key="4"/>
<reference key="1">
    <citation type="journal article" date="2006" name="Gene">
        <title>Adaptive selection of mitochondrial complex I subunits during primate radiation.</title>
        <authorList>
            <person name="Mishmar D."/>
            <person name="Ruiz-Pesini E."/>
            <person name="Mondragon-Palomino M."/>
            <person name="Procaccio V."/>
            <person name="Gaut B."/>
            <person name="Wallace D.C."/>
        </authorList>
    </citation>
    <scope>NUCLEOTIDE SEQUENCE [MRNA]</scope>
</reference>
<gene>
    <name type="primary">NDUFB6</name>
</gene>
<dbReference type="EMBL" id="DQ885695">
    <property type="protein sequence ID" value="ABH12204.1"/>
    <property type="molecule type" value="mRNA"/>
</dbReference>
<dbReference type="SMR" id="P0CB94"/>
<dbReference type="GO" id="GO:0005743">
    <property type="term" value="C:mitochondrial inner membrane"/>
    <property type="evidence" value="ECO:0007669"/>
    <property type="project" value="UniProtKB-SubCell"/>
</dbReference>
<dbReference type="GO" id="GO:0045271">
    <property type="term" value="C:respiratory chain complex I"/>
    <property type="evidence" value="ECO:0000250"/>
    <property type="project" value="UniProtKB"/>
</dbReference>
<dbReference type="GO" id="GO:0006120">
    <property type="term" value="P:mitochondrial electron transport, NADH to ubiquinone"/>
    <property type="evidence" value="ECO:0007669"/>
    <property type="project" value="InterPro"/>
</dbReference>
<dbReference type="InterPro" id="IPR019174">
    <property type="entry name" value="NADH_DH_b-subcmplx_su6"/>
</dbReference>
<dbReference type="PANTHER" id="PTHR15083">
    <property type="entry name" value="NADH DEHYDROGENASE [UBIQUINONE] 1 BETA SUBCOMPLEX SUBUNIT 6"/>
    <property type="match status" value="1"/>
</dbReference>
<dbReference type="PANTHER" id="PTHR15083:SF0">
    <property type="entry name" value="NADH DEHYDROGENASE [UBIQUINONE] 1 BETA SUBCOMPLEX SUBUNIT 6"/>
    <property type="match status" value="1"/>
</dbReference>
<dbReference type="Pfam" id="PF09782">
    <property type="entry name" value="NDUF_B6"/>
    <property type="match status" value="1"/>
</dbReference>
<proteinExistence type="evidence at transcript level"/>
<comment type="function">
    <text evidence="1">Accessory subunit of the mitochondrial membrane respiratory chain NADH dehydrogenase (Complex I), that is believed not to be involved in catalysis. Complex I functions in the transfer of electrons from NADH to the respiratory chain. The immediate electron acceptor for the enzyme is believed to be ubiquinone.</text>
</comment>
<comment type="subunit">
    <text evidence="1">Complex I is composed of 45 different subunits.</text>
</comment>
<comment type="subcellular location">
    <subcellularLocation>
        <location evidence="1">Mitochondrion inner membrane</location>
        <topology evidence="3">Single-pass membrane protein</topology>
        <orientation evidence="1">Matrix side</orientation>
    </subcellularLocation>
</comment>
<comment type="similarity">
    <text evidence="4">Belongs to the complex I NDUFB6 subunit family.</text>
</comment>
<protein>
    <recommendedName>
        <fullName>NADH dehydrogenase [ubiquinone] 1 beta subcomplex subunit 6</fullName>
    </recommendedName>
    <alternativeName>
        <fullName>Complex I-B17</fullName>
        <shortName>CI-B17</shortName>
    </alternativeName>
    <alternativeName>
        <fullName>NADH-ubiquinone oxidoreductase B17 subunit</fullName>
    </alternativeName>
</protein>
<sequence>MTGYTPDEKLRLQQLRELRRRWLKDQELSPREPVLPPQKMGPMEKFWNKFLENKSPWRKMVHGVYQKSIFVFTHVLVPVWIIHYYMKYHVSEKPYGIVEKKSRIFPGDTILETGEVIPPMKEFPDQHH</sequence>
<feature type="initiator methionine" description="Removed" evidence="1">
    <location>
        <position position="1"/>
    </location>
</feature>
<feature type="chain" id="PRO_0000389265" description="NADH dehydrogenase [ubiquinone] 1 beta subcomplex subunit 6">
    <location>
        <begin position="2"/>
        <end position="128"/>
    </location>
</feature>
<feature type="transmembrane region" description="Helical" evidence="3">
    <location>
        <begin position="68"/>
        <end position="86"/>
    </location>
</feature>
<feature type="modified residue" description="N-acetylthreonine" evidence="1">
    <location>
        <position position="2"/>
    </location>
</feature>
<feature type="modified residue" description="N6-acetyllysine" evidence="2">
    <location>
        <position position="24"/>
    </location>
</feature>
<keyword id="KW-0007">Acetylation</keyword>
<keyword id="KW-0249">Electron transport</keyword>
<keyword id="KW-0472">Membrane</keyword>
<keyword id="KW-0496">Mitochondrion</keyword>
<keyword id="KW-0999">Mitochondrion inner membrane</keyword>
<keyword id="KW-0679">Respiratory chain</keyword>
<keyword id="KW-0812">Transmembrane</keyword>
<keyword id="KW-1133">Transmembrane helix</keyword>
<keyword id="KW-0813">Transport</keyword>
<name>NDUB6_PONPY</name>